<gene>
    <name type="primary">vps26b</name>
    <name type="ORF">TTpA009m02.1</name>
</gene>
<sequence length="337" mass="39194">MSFFGFGPAAELDIALTDGESRRRVEHKTEDGKKEKYFLFYDGETVSGRVTVNLRNPGKRLEHQGLKIEFIGQIELYYDRGNHHEFVSLVKDLARPGEISQSQSFDFEFTHVEKPYESYTGQNVKLRYFLRATLSRRLNDVVKEMDIVVHTLSTYPELNSSIKMEVGIEDCLHIEFEYNKSKYHLKDVIVGKIYFLLVRIKIKHMEIDIIKRETTGTGPNVYHENDTIAKYEIMDGAPVRGESIPIRLFLAGYELTPTMRDINKKFSVRYYLNLVLIDEEERRYFKQQEVVLWRKGDIVRKSMSHQAAIASQRFEGTSHPETRPQHSGAAAVEQEQE</sequence>
<dbReference type="EMBL" id="CR760763">
    <property type="protein sequence ID" value="CAJ83153.1"/>
    <property type="molecule type" value="mRNA"/>
</dbReference>
<dbReference type="EMBL" id="BC091021">
    <property type="protein sequence ID" value="AAH91021.1"/>
    <property type="molecule type" value="mRNA"/>
</dbReference>
<dbReference type="RefSeq" id="NP_001016540.1">
    <property type="nucleotide sequence ID" value="NM_001016540.2"/>
</dbReference>
<dbReference type="SMR" id="Q5BKM4"/>
<dbReference type="FunCoup" id="Q5BKM4">
    <property type="interactions" value="2917"/>
</dbReference>
<dbReference type="STRING" id="8364.ENSXETP00000027198"/>
<dbReference type="PaxDb" id="8364-ENSXETP00000018272"/>
<dbReference type="DNASU" id="549294"/>
<dbReference type="GeneID" id="549294"/>
<dbReference type="KEGG" id="xtr:549294"/>
<dbReference type="AGR" id="Xenbase:XB-GENE-945593"/>
<dbReference type="CTD" id="112936"/>
<dbReference type="Xenbase" id="XB-GENE-945593">
    <property type="gene designation" value="vps26b"/>
</dbReference>
<dbReference type="eggNOG" id="KOG3063">
    <property type="taxonomic scope" value="Eukaryota"/>
</dbReference>
<dbReference type="HOGENOM" id="CLU_031077_0_0_1"/>
<dbReference type="InParanoid" id="Q5BKM4"/>
<dbReference type="OMA" id="LVRINIK"/>
<dbReference type="OrthoDB" id="3821113at2759"/>
<dbReference type="PhylomeDB" id="Q5BKM4"/>
<dbReference type="TreeFam" id="TF300907"/>
<dbReference type="Proteomes" id="UP000008143">
    <property type="component" value="Chromosome 7"/>
</dbReference>
<dbReference type="Bgee" id="ENSXETG00000008335">
    <property type="expression patterns" value="Expressed in brain and 13 other cell types or tissues"/>
</dbReference>
<dbReference type="ExpressionAtlas" id="Q5BKM4">
    <property type="expression patterns" value="differential"/>
</dbReference>
<dbReference type="GO" id="GO:0005768">
    <property type="term" value="C:endosome"/>
    <property type="evidence" value="ECO:0007669"/>
    <property type="project" value="UniProtKB-SubCell"/>
</dbReference>
<dbReference type="GO" id="GO:0016020">
    <property type="term" value="C:membrane"/>
    <property type="evidence" value="ECO:0007669"/>
    <property type="project" value="UniProtKB-SubCell"/>
</dbReference>
<dbReference type="GO" id="GO:0006886">
    <property type="term" value="P:intracellular protein transport"/>
    <property type="evidence" value="ECO:0007669"/>
    <property type="project" value="InterPro"/>
</dbReference>
<dbReference type="FunFam" id="2.60.40.640:FF:000001">
    <property type="entry name" value="Vacuolar protein sorting-associated protein 26A"/>
    <property type="match status" value="1"/>
</dbReference>
<dbReference type="FunFam" id="2.60.40.640:FF:000002">
    <property type="entry name" value="Vacuolar protein sorting-associated protein 26A"/>
    <property type="match status" value="1"/>
</dbReference>
<dbReference type="Gene3D" id="2.60.40.640">
    <property type="match status" value="2"/>
</dbReference>
<dbReference type="InterPro" id="IPR014752">
    <property type="entry name" value="Arrestin-like_C"/>
</dbReference>
<dbReference type="InterPro" id="IPR028934">
    <property type="entry name" value="Vps26-related"/>
</dbReference>
<dbReference type="PANTHER" id="PTHR12233">
    <property type="entry name" value="VACUOLAR PROTEIN SORTING 26 RELATED"/>
    <property type="match status" value="1"/>
</dbReference>
<dbReference type="Pfam" id="PF03643">
    <property type="entry name" value="Vps26"/>
    <property type="match status" value="1"/>
</dbReference>
<proteinExistence type="evidence at transcript level"/>
<evidence type="ECO:0000250" key="1">
    <source>
        <dbReference type="UniProtKB" id="Q8C0E2"/>
    </source>
</evidence>
<evidence type="ECO:0000256" key="2">
    <source>
        <dbReference type="SAM" id="MobiDB-lite"/>
    </source>
</evidence>
<evidence type="ECO:0000305" key="3"/>
<comment type="function">
    <text evidence="1">Acts as a component of the retromer cargo-selective complex (CSC). The CSC is believed to be the core functional component of retromer or respective retromer complex variants acting to prevent missorting of selected transmembrane cargo proteins into the lysosomal degradation pathway. Retromer mediates retrograde transport of cargo proteins from endosomes to the trans-Golgi network (TGN) (By similarity).</text>
</comment>
<comment type="subunit">
    <text evidence="1">Component of the heterotrimeric retromer cargo-selective complex (CSC) which is believed to associate with variable sorting nexins to form functionally distinct retromer complex variants (By similarity).</text>
</comment>
<comment type="subcellular location">
    <subcellularLocation>
        <location evidence="1">Cytoplasm</location>
    </subcellularLocation>
    <subcellularLocation>
        <location>Membrane</location>
        <topology evidence="1">Peripheral membrane protein</topology>
    </subcellularLocation>
    <subcellularLocation>
        <location evidence="1">Endosome</location>
    </subcellularLocation>
</comment>
<comment type="similarity">
    <text evidence="3">Belongs to the VPS26 family.</text>
</comment>
<feature type="chain" id="PRO_0000247096" description="Vacuolar protein sorting-associated protein 26B">
    <location>
        <begin position="1"/>
        <end position="337"/>
    </location>
</feature>
<feature type="region of interest" description="Disordered" evidence="2">
    <location>
        <begin position="311"/>
        <end position="337"/>
    </location>
</feature>
<reference key="1">
    <citation type="submission" date="2006-03" db="EMBL/GenBank/DDBJ databases">
        <authorList>
            <consortium name="Sanger Xenopus tropicalis EST/cDNA project"/>
        </authorList>
    </citation>
    <scope>NUCLEOTIDE SEQUENCE [LARGE SCALE MRNA]</scope>
    <source>
        <tissue>Tadpole</tissue>
    </source>
</reference>
<reference key="2">
    <citation type="submission" date="2005-03" db="EMBL/GenBank/DDBJ databases">
        <authorList>
            <consortium name="NIH - Xenopus Gene Collection (XGC) project"/>
        </authorList>
    </citation>
    <scope>NUCLEOTIDE SEQUENCE [LARGE SCALE MRNA]</scope>
</reference>
<keyword id="KW-0963">Cytoplasm</keyword>
<keyword id="KW-0967">Endosome</keyword>
<keyword id="KW-0472">Membrane</keyword>
<keyword id="KW-0653">Protein transport</keyword>
<keyword id="KW-1185">Reference proteome</keyword>
<keyword id="KW-0813">Transport</keyword>
<organism>
    <name type="scientific">Xenopus tropicalis</name>
    <name type="common">Western clawed frog</name>
    <name type="synonym">Silurana tropicalis</name>
    <dbReference type="NCBI Taxonomy" id="8364"/>
    <lineage>
        <taxon>Eukaryota</taxon>
        <taxon>Metazoa</taxon>
        <taxon>Chordata</taxon>
        <taxon>Craniata</taxon>
        <taxon>Vertebrata</taxon>
        <taxon>Euteleostomi</taxon>
        <taxon>Amphibia</taxon>
        <taxon>Batrachia</taxon>
        <taxon>Anura</taxon>
        <taxon>Pipoidea</taxon>
        <taxon>Pipidae</taxon>
        <taxon>Xenopodinae</taxon>
        <taxon>Xenopus</taxon>
        <taxon>Silurana</taxon>
    </lineage>
</organism>
<protein>
    <recommendedName>
        <fullName>Vacuolar protein sorting-associated protein 26B</fullName>
    </recommendedName>
    <alternativeName>
        <fullName>Vesicle protein sorting 26B</fullName>
    </alternativeName>
</protein>
<name>VP26B_XENTR</name>
<accession>Q5BKM4</accession>